<evidence type="ECO:0000255" key="1">
    <source>
        <dbReference type="PROSITE-ProRule" id="PRU00473"/>
    </source>
</evidence>
<evidence type="ECO:0000303" key="2">
    <source>
    </source>
</evidence>
<evidence type="ECO:0000303" key="3">
    <source>
    </source>
</evidence>
<evidence type="ECO:0000305" key="4"/>
<evidence type="ECO:0000305" key="5">
    <source>
    </source>
</evidence>
<dbReference type="EMBL" id="D38582">
    <property type="protein sequence ID" value="BAA07592.1"/>
    <property type="molecule type" value="Genomic_DNA"/>
</dbReference>
<dbReference type="EMBL" id="U70214">
    <property type="protein sequence ID" value="AAB08650.1"/>
    <property type="molecule type" value="Genomic_DNA"/>
</dbReference>
<dbReference type="EMBL" id="U00096">
    <property type="status" value="NOT_ANNOTATED_CDS"/>
    <property type="molecule type" value="Genomic_DNA"/>
</dbReference>
<dbReference type="EMBL" id="AP009048">
    <property type="status" value="NOT_ANNOTATED_CDS"/>
    <property type="molecule type" value="Genomic_DNA"/>
</dbReference>
<dbReference type="PIR" id="G64747">
    <property type="entry name" value="G64747"/>
</dbReference>
<dbReference type="SMR" id="Q47154"/>
<dbReference type="FunCoup" id="Q47154">
    <property type="interactions" value="162"/>
</dbReference>
<dbReference type="IntAct" id="Q47154">
    <property type="interactions" value="2"/>
</dbReference>
<dbReference type="EchoBASE" id="EB2937"/>
<dbReference type="InParanoid" id="Q47154"/>
<dbReference type="PhylomeDB" id="Q47154"/>
<dbReference type="Proteomes" id="UP000000625">
    <property type="component" value="Chromosome"/>
</dbReference>
<dbReference type="GO" id="GO:0120101">
    <property type="term" value="C:bacterial-type flagellum stator complex"/>
    <property type="evidence" value="ECO:0000318"/>
    <property type="project" value="GO_Central"/>
</dbReference>
<dbReference type="GO" id="GO:0071973">
    <property type="term" value="P:bacterial-type flagellum-dependent cell motility"/>
    <property type="evidence" value="ECO:0000318"/>
    <property type="project" value="GO_Central"/>
</dbReference>
<dbReference type="CDD" id="cd07185">
    <property type="entry name" value="OmpA_C-like"/>
    <property type="match status" value="1"/>
</dbReference>
<dbReference type="Gene3D" id="3.30.1330.60">
    <property type="entry name" value="OmpA-like domain"/>
    <property type="match status" value="1"/>
</dbReference>
<dbReference type="InterPro" id="IPR050330">
    <property type="entry name" value="Bact_OuterMem_StrucFunc"/>
</dbReference>
<dbReference type="InterPro" id="IPR006665">
    <property type="entry name" value="OmpA-like"/>
</dbReference>
<dbReference type="InterPro" id="IPR036737">
    <property type="entry name" value="OmpA-like_sf"/>
</dbReference>
<dbReference type="NCBIfam" id="NF005273">
    <property type="entry name" value="PRK06778.1"/>
    <property type="match status" value="1"/>
</dbReference>
<dbReference type="PANTHER" id="PTHR30329:SF21">
    <property type="entry name" value="LIPOPROTEIN YIAD-RELATED"/>
    <property type="match status" value="1"/>
</dbReference>
<dbReference type="PANTHER" id="PTHR30329">
    <property type="entry name" value="STATOR ELEMENT OF FLAGELLAR MOTOR COMPLEX"/>
    <property type="match status" value="1"/>
</dbReference>
<dbReference type="Pfam" id="PF00691">
    <property type="entry name" value="OmpA"/>
    <property type="match status" value="1"/>
</dbReference>
<dbReference type="SUPFAM" id="SSF103088">
    <property type="entry name" value="OmpA-like"/>
    <property type="match status" value="1"/>
</dbReference>
<dbReference type="PROSITE" id="PS51123">
    <property type="entry name" value="OMPA_2"/>
    <property type="match status" value="1"/>
</dbReference>
<sequence>MAVPEETEKKARDVNEKTALLKKKSATELGELATSINTIARDAHMEANLEMEIVPQGLRVLIKDDQNRNMFERGSAKIMPFFKTLLVELAPVFDSLDNKIIITGHTDAMAYKNNIYNNWNLSGDRALSARRVLEEAGMPEDKVMQVSAMADQMLLDSKNPQSAGNRRIEIMVLTKSASDTLYQYFGQHGDKVVQPLVQKLDKQQVLSQRTR</sequence>
<comment type="similarity">
    <text evidence="4">Belongs to the MotB family.</text>
</comment>
<comment type="caution">
    <text evidence="5">Could be the product of a pseudogene. Promoterless gene that is a remnant of an ancestral flagellar gene cluster, Flag-2. The N-terminus is shorter than in orthologs.</text>
</comment>
<keyword id="KW-1185">Reference proteome</keyword>
<name>LAFU_ECOLI</name>
<protein>
    <recommendedName>
        <fullName evidence="4">Putative truncated flagellar export/assembly protein LafU</fullName>
    </recommendedName>
</protein>
<reference key="1">
    <citation type="journal article" date="1995" name="Mutat. Res.">
        <title>dinP, a new gene in Escherichia coli, whose product shows similarities to UmuC and its homologues.</title>
        <authorList>
            <person name="Ohmori H."/>
            <person name="Hatada E."/>
            <person name="Qiao Y."/>
            <person name="Tsuji M."/>
            <person name="Fukuda R."/>
        </authorList>
    </citation>
    <scope>NUCLEOTIDE SEQUENCE [GENOMIC DNA]</scope>
    <source>
        <strain>K12 / W3110 / ATCC 27325 / DSM 5911</strain>
    </source>
</reference>
<reference key="2">
    <citation type="submission" date="1996-02" db="EMBL/GenBank/DDBJ databases">
        <title>Systematic sequencing of the Escherichia coli genome: analysis of the 4.0 - 6.0 min (189,987 - 281,416bp) region.</title>
        <authorList>
            <person name="Takemoto K."/>
            <person name="Mori H."/>
            <person name="Murayama N."/>
            <person name="Kataoka K."/>
            <person name="Yano M."/>
            <person name="Itoh T."/>
            <person name="Yamamoto Y."/>
            <person name="Inokuchi H."/>
            <person name="Miki T."/>
            <person name="Hatada E."/>
            <person name="Fukuda R."/>
            <person name="Ichihara S."/>
            <person name="Mizuno T."/>
            <person name="Makino K."/>
            <person name="Nakata A."/>
            <person name="Yura T."/>
            <person name="Sampei G."/>
            <person name="Mizobuchi K."/>
        </authorList>
    </citation>
    <scope>NUCLEOTIDE SEQUENCE [LARGE SCALE GENOMIC DNA]</scope>
    <source>
        <strain>K12 / W3110 / ATCC 27325 / DSM 5911</strain>
    </source>
</reference>
<reference key="3">
    <citation type="submission" date="1997-01" db="EMBL/GenBank/DDBJ databases">
        <title>Sequence of minutes 4-25 of Escherichia coli.</title>
        <authorList>
            <person name="Chung E."/>
            <person name="Allen E."/>
            <person name="Araujo R."/>
            <person name="Aparicio A.M."/>
            <person name="Davis K."/>
            <person name="Duncan M."/>
            <person name="Federspiel N."/>
            <person name="Hyman R."/>
            <person name="Kalman S."/>
            <person name="Komp C."/>
            <person name="Kurdi O."/>
            <person name="Lew H."/>
            <person name="Lin D."/>
            <person name="Namath A."/>
            <person name="Oefner P."/>
            <person name="Roberts D."/>
            <person name="Schramm S."/>
            <person name="Davis R.W."/>
        </authorList>
    </citation>
    <scope>NUCLEOTIDE SEQUENCE [LARGE SCALE GENOMIC DNA]</scope>
    <source>
        <strain>K12 / MG1655 / ATCC 47076</strain>
    </source>
</reference>
<reference key="4">
    <citation type="journal article" date="1997" name="Science">
        <title>The complete genome sequence of Escherichia coli K-12.</title>
        <authorList>
            <person name="Blattner F.R."/>
            <person name="Plunkett G. III"/>
            <person name="Bloch C.A."/>
            <person name="Perna N.T."/>
            <person name="Burland V."/>
            <person name="Riley M."/>
            <person name="Collado-Vides J."/>
            <person name="Glasner J.D."/>
            <person name="Rode C.K."/>
            <person name="Mayhew G.F."/>
            <person name="Gregor J."/>
            <person name="Davis N.W."/>
            <person name="Kirkpatrick H.A."/>
            <person name="Goeden M.A."/>
            <person name="Rose D.J."/>
            <person name="Mau B."/>
            <person name="Shao Y."/>
        </authorList>
    </citation>
    <scope>NUCLEOTIDE SEQUENCE [LARGE SCALE GENOMIC DNA]</scope>
    <source>
        <strain>K12 / MG1655 / ATCC 47076</strain>
    </source>
</reference>
<reference key="5">
    <citation type="journal article" date="2006" name="Mol. Syst. Biol.">
        <title>Highly accurate genome sequences of Escherichia coli K-12 strains MG1655 and W3110.</title>
        <authorList>
            <person name="Hayashi K."/>
            <person name="Morooka N."/>
            <person name="Yamamoto Y."/>
            <person name="Fujita K."/>
            <person name="Isono K."/>
            <person name="Choi S."/>
            <person name="Ohtsubo E."/>
            <person name="Baba T."/>
            <person name="Wanner B.L."/>
            <person name="Mori H."/>
            <person name="Horiuchi T."/>
        </authorList>
    </citation>
    <scope>NUCLEOTIDE SEQUENCE [LARGE SCALE GENOMIC DNA]</scope>
    <source>
        <strain>K12 / W3110 / ATCC 27325 / DSM 5911</strain>
    </source>
</reference>
<reference key="6">
    <citation type="journal article" date="2005" name="J. Bacteriol.">
        <title>The Flag-2 locus, an ancestral gene cluster, is potentially associated with a novel flagellar system from Escherichia coli.</title>
        <authorList>
            <person name="Ren C.-P."/>
            <person name="Beatson S.A."/>
            <person name="Parkhill J."/>
            <person name="Pallen M.J."/>
        </authorList>
    </citation>
    <scope>IDENTIFICATION AS A PSEUDOGENE</scope>
    <source>
        <strain>K12</strain>
    </source>
</reference>
<proteinExistence type="uncertain"/>
<accession>Q47154</accession>
<accession>P75674</accession>
<accession>Q47682</accession>
<feature type="chain" id="PRO_0000196258" description="Putative truncated flagellar export/assembly protein LafU">
    <location>
        <begin position="1"/>
        <end position="211"/>
    </location>
</feature>
<feature type="domain" description="OmpA-like" evidence="1">
    <location>
        <begin position="58"/>
        <end position="176"/>
    </location>
</feature>
<organism>
    <name type="scientific">Escherichia coli (strain K12)</name>
    <dbReference type="NCBI Taxonomy" id="83333"/>
    <lineage>
        <taxon>Bacteria</taxon>
        <taxon>Pseudomonadati</taxon>
        <taxon>Pseudomonadota</taxon>
        <taxon>Gammaproteobacteria</taxon>
        <taxon>Enterobacterales</taxon>
        <taxon>Enterobacteriaceae</taxon>
        <taxon>Escherichia</taxon>
    </lineage>
</organism>
<gene>
    <name evidence="2" type="primary">lafU</name>
    <name evidence="3" type="synonym">mbhA</name>
    <name type="ordered locus">b0230</name>
    <name type="ordered locus">JW5812</name>
</gene>